<name>QUEA_CLOP1</name>
<keyword id="KW-0963">Cytoplasm</keyword>
<keyword id="KW-0671">Queuosine biosynthesis</keyword>
<keyword id="KW-0949">S-adenosyl-L-methionine</keyword>
<keyword id="KW-0808">Transferase</keyword>
<organism>
    <name type="scientific">Clostridium perfringens (strain ATCC 13124 / DSM 756 / JCM 1290 / NCIMB 6125 / NCTC 8237 / Type A)</name>
    <dbReference type="NCBI Taxonomy" id="195103"/>
    <lineage>
        <taxon>Bacteria</taxon>
        <taxon>Bacillati</taxon>
        <taxon>Bacillota</taxon>
        <taxon>Clostridia</taxon>
        <taxon>Eubacteriales</taxon>
        <taxon>Clostridiaceae</taxon>
        <taxon>Clostridium</taxon>
    </lineage>
</organism>
<gene>
    <name evidence="1" type="primary">queA</name>
    <name type="ordered locus">CPF_2202</name>
</gene>
<sequence>MKVSDFYFELPEELIAQYPLEKRDSSRLMVLDKKTGEIEHRKFHDILEYLNEGDTLVLNNTRVLPARLIGEKEETGGKIEFLLLKRIEGDKWECLAKPGRKAKVGTVFTFGEGKLKAIVREIGEEGNRIIEFKYDGIFEQVLDELGQMPLPPYIHEKLEDKERYQTVYSKEKGSAAAPTAGLHFTEELLKEIKDKGVNIAYLTLHVGLGTFRPVKVDDVNNHVMHSEYYHLDKENAELINKTKEAGKRVIAVGTTSSRTLETIGDENGRVREQSGWTDIFIYPGYKFKIVDNLITNFHLPESTLIMLVSALAGQDNIMNAYNTAVKEKYRFFSFGDSMFIK</sequence>
<accession>Q0TP14</accession>
<reference key="1">
    <citation type="journal article" date="2006" name="Genome Res.">
        <title>Skewed genomic variability in strains of the toxigenic bacterial pathogen, Clostridium perfringens.</title>
        <authorList>
            <person name="Myers G.S.A."/>
            <person name="Rasko D.A."/>
            <person name="Cheung J.K."/>
            <person name="Ravel J."/>
            <person name="Seshadri R."/>
            <person name="DeBoy R.T."/>
            <person name="Ren Q."/>
            <person name="Varga J."/>
            <person name="Awad M.M."/>
            <person name="Brinkac L.M."/>
            <person name="Daugherty S.C."/>
            <person name="Haft D.H."/>
            <person name="Dodson R.J."/>
            <person name="Madupu R."/>
            <person name="Nelson W.C."/>
            <person name="Rosovitz M.J."/>
            <person name="Sullivan S.A."/>
            <person name="Khouri H."/>
            <person name="Dimitrov G.I."/>
            <person name="Watkins K.L."/>
            <person name="Mulligan S."/>
            <person name="Benton J."/>
            <person name="Radune D."/>
            <person name="Fisher D.J."/>
            <person name="Atkins H.S."/>
            <person name="Hiscox T."/>
            <person name="Jost B.H."/>
            <person name="Billington S.J."/>
            <person name="Songer J.G."/>
            <person name="McClane B.A."/>
            <person name="Titball R.W."/>
            <person name="Rood J.I."/>
            <person name="Melville S.B."/>
            <person name="Paulsen I.T."/>
        </authorList>
    </citation>
    <scope>NUCLEOTIDE SEQUENCE [LARGE SCALE GENOMIC DNA]</scope>
    <source>
        <strain>ATCC 13124 / DSM 756 / JCM 1290 / NCIMB 6125 / NCTC 8237 / S 107 / Type A</strain>
    </source>
</reference>
<evidence type="ECO:0000255" key="1">
    <source>
        <dbReference type="HAMAP-Rule" id="MF_00113"/>
    </source>
</evidence>
<protein>
    <recommendedName>
        <fullName evidence="1">S-adenosylmethionine:tRNA ribosyltransferase-isomerase</fullName>
        <ecNumber evidence="1">2.4.99.17</ecNumber>
    </recommendedName>
    <alternativeName>
        <fullName evidence="1">Queuosine biosynthesis protein QueA</fullName>
    </alternativeName>
</protein>
<proteinExistence type="inferred from homology"/>
<dbReference type="EC" id="2.4.99.17" evidence="1"/>
<dbReference type="EMBL" id="CP000246">
    <property type="protein sequence ID" value="ABG83418.1"/>
    <property type="molecule type" value="Genomic_DNA"/>
</dbReference>
<dbReference type="RefSeq" id="WP_003461896.1">
    <property type="nucleotide sequence ID" value="NC_008261.1"/>
</dbReference>
<dbReference type="SMR" id="Q0TP14"/>
<dbReference type="STRING" id="195103.CPF_2202"/>
<dbReference type="PaxDb" id="195103-CPF_2202"/>
<dbReference type="GeneID" id="93001517"/>
<dbReference type="KEGG" id="cpf:CPF_2202"/>
<dbReference type="eggNOG" id="COG0809">
    <property type="taxonomic scope" value="Bacteria"/>
</dbReference>
<dbReference type="HOGENOM" id="CLU_039110_1_0_9"/>
<dbReference type="UniPathway" id="UPA00392"/>
<dbReference type="Proteomes" id="UP000001823">
    <property type="component" value="Chromosome"/>
</dbReference>
<dbReference type="GO" id="GO:0005737">
    <property type="term" value="C:cytoplasm"/>
    <property type="evidence" value="ECO:0007669"/>
    <property type="project" value="UniProtKB-SubCell"/>
</dbReference>
<dbReference type="GO" id="GO:0051075">
    <property type="term" value="F:S-adenosylmethionine:tRNA ribosyltransferase-isomerase activity"/>
    <property type="evidence" value="ECO:0007669"/>
    <property type="project" value="UniProtKB-EC"/>
</dbReference>
<dbReference type="GO" id="GO:0008616">
    <property type="term" value="P:queuosine biosynthetic process"/>
    <property type="evidence" value="ECO:0007669"/>
    <property type="project" value="UniProtKB-UniRule"/>
</dbReference>
<dbReference type="GO" id="GO:0002099">
    <property type="term" value="P:tRNA wobble guanine modification"/>
    <property type="evidence" value="ECO:0007669"/>
    <property type="project" value="TreeGrafter"/>
</dbReference>
<dbReference type="FunFam" id="2.40.10.240:FF:000002">
    <property type="entry name" value="S-adenosylmethionine:tRNA ribosyltransferase-isomerase"/>
    <property type="match status" value="1"/>
</dbReference>
<dbReference type="FunFam" id="3.40.1780.10:FF:000001">
    <property type="entry name" value="S-adenosylmethionine:tRNA ribosyltransferase-isomerase"/>
    <property type="match status" value="1"/>
</dbReference>
<dbReference type="Gene3D" id="2.40.10.240">
    <property type="entry name" value="QueA-like"/>
    <property type="match status" value="1"/>
</dbReference>
<dbReference type="Gene3D" id="3.40.1780.10">
    <property type="entry name" value="QueA-like"/>
    <property type="match status" value="1"/>
</dbReference>
<dbReference type="HAMAP" id="MF_00113">
    <property type="entry name" value="QueA"/>
    <property type="match status" value="1"/>
</dbReference>
<dbReference type="InterPro" id="IPR003699">
    <property type="entry name" value="QueA"/>
</dbReference>
<dbReference type="InterPro" id="IPR042118">
    <property type="entry name" value="QueA_dom1"/>
</dbReference>
<dbReference type="InterPro" id="IPR042119">
    <property type="entry name" value="QueA_dom2"/>
</dbReference>
<dbReference type="InterPro" id="IPR036100">
    <property type="entry name" value="QueA_sf"/>
</dbReference>
<dbReference type="NCBIfam" id="NF001140">
    <property type="entry name" value="PRK00147.1"/>
    <property type="match status" value="1"/>
</dbReference>
<dbReference type="NCBIfam" id="TIGR00113">
    <property type="entry name" value="queA"/>
    <property type="match status" value="1"/>
</dbReference>
<dbReference type="PANTHER" id="PTHR30307">
    <property type="entry name" value="S-ADENOSYLMETHIONINE:TRNA RIBOSYLTRANSFERASE-ISOMERASE"/>
    <property type="match status" value="1"/>
</dbReference>
<dbReference type="PANTHER" id="PTHR30307:SF0">
    <property type="entry name" value="S-ADENOSYLMETHIONINE:TRNA RIBOSYLTRANSFERASE-ISOMERASE"/>
    <property type="match status" value="1"/>
</dbReference>
<dbReference type="Pfam" id="PF02547">
    <property type="entry name" value="Queuosine_synth"/>
    <property type="match status" value="1"/>
</dbReference>
<dbReference type="SUPFAM" id="SSF111337">
    <property type="entry name" value="QueA-like"/>
    <property type="match status" value="1"/>
</dbReference>
<feature type="chain" id="PRO_1000015202" description="S-adenosylmethionine:tRNA ribosyltransferase-isomerase">
    <location>
        <begin position="1"/>
        <end position="341"/>
    </location>
</feature>
<comment type="function">
    <text evidence="1">Transfers and isomerizes the ribose moiety from AdoMet to the 7-aminomethyl group of 7-deazaguanine (preQ1-tRNA) to give epoxyqueuosine (oQ-tRNA).</text>
</comment>
<comment type="catalytic activity">
    <reaction evidence="1">
        <text>7-aminomethyl-7-carbaguanosine(34) in tRNA + S-adenosyl-L-methionine = epoxyqueuosine(34) in tRNA + adenine + L-methionine + 2 H(+)</text>
        <dbReference type="Rhea" id="RHEA:32155"/>
        <dbReference type="Rhea" id="RHEA-COMP:10342"/>
        <dbReference type="Rhea" id="RHEA-COMP:18582"/>
        <dbReference type="ChEBI" id="CHEBI:15378"/>
        <dbReference type="ChEBI" id="CHEBI:16708"/>
        <dbReference type="ChEBI" id="CHEBI:57844"/>
        <dbReference type="ChEBI" id="CHEBI:59789"/>
        <dbReference type="ChEBI" id="CHEBI:82833"/>
        <dbReference type="ChEBI" id="CHEBI:194443"/>
        <dbReference type="EC" id="2.4.99.17"/>
    </reaction>
</comment>
<comment type="pathway">
    <text evidence="1">tRNA modification; tRNA-queuosine biosynthesis.</text>
</comment>
<comment type="subunit">
    <text evidence="1">Monomer.</text>
</comment>
<comment type="subcellular location">
    <subcellularLocation>
        <location evidence="1">Cytoplasm</location>
    </subcellularLocation>
</comment>
<comment type="similarity">
    <text evidence="1">Belongs to the QueA family.</text>
</comment>